<feature type="chain" id="PRO_0000421418" description="Pre-hexon-linking protein VIII" evidence="1">
    <location>
        <begin position="1"/>
        <end position="245"/>
    </location>
</feature>
<feature type="peptide" id="PRO_0000421419" description="Hexon-linking protein-N" evidence="1">
    <location>
        <begin position="1"/>
        <end position="115"/>
    </location>
</feature>
<feature type="propeptide" id="PRO_0000036511" evidence="1">
    <location>
        <begin position="116"/>
        <end position="167"/>
    </location>
</feature>
<feature type="peptide" id="PRO_0000439696" description="Hexon-linking protein-C" evidence="1">
    <location>
        <begin position="168"/>
        <end position="245"/>
    </location>
</feature>
<feature type="site" description="Cleavage; by viral protease" evidence="1">
    <location>
        <begin position="115"/>
        <end position="116"/>
    </location>
</feature>
<feature type="site" description="Cleavage; by viral protease" evidence="1">
    <location>
        <begin position="167"/>
        <end position="168"/>
    </location>
</feature>
<keyword id="KW-0167">Capsid protein</keyword>
<keyword id="KW-1048">Host nucleus</keyword>
<keyword id="KW-0426">Late protein</keyword>
<keyword id="KW-0597">Phosphoprotein</keyword>
<keyword id="KW-1185">Reference proteome</keyword>
<keyword id="KW-0946">Virion</keyword>
<protein>
    <recommendedName>
        <fullName evidence="1">Pre-hexon-linking protein VIII</fullName>
    </recommendedName>
    <alternativeName>
        <fullName evidence="1">Pre-protein VIII</fullName>
        <shortName evidence="1">pVIII</shortName>
    </alternativeName>
    <component>
        <recommendedName>
            <fullName evidence="1">Hexon-linking protein-N</fullName>
        </recommendedName>
        <alternativeName>
            <fullName evidence="1">12.1 kDa protein VIII</fullName>
        </alternativeName>
        <alternativeName>
            <fullName evidence="1">Protein VIII-N</fullName>
        </alternativeName>
    </component>
    <component>
        <recommendedName>
            <fullName evidence="1">Hexon-linking protein-C</fullName>
        </recommendedName>
        <alternativeName>
            <fullName evidence="1">7.6 kDa protein VIII</fullName>
        </alternativeName>
        <alternativeName>
            <fullName evidence="1">Protein VIII-C</fullName>
        </alternativeName>
    </component>
</protein>
<gene>
    <name evidence="1" type="primary">L4</name>
</gene>
<evidence type="ECO:0000255" key="1">
    <source>
        <dbReference type="HAMAP-Rule" id="MF_04049"/>
    </source>
</evidence>
<evidence type="ECO:0000305" key="2"/>
<name>CAP8_ADEG1</name>
<proteinExistence type="inferred from homology"/>
<dbReference type="EMBL" id="X84724">
    <property type="protein sequence ID" value="CAA59205.1"/>
    <property type="molecule type" value="Genomic_DNA"/>
</dbReference>
<dbReference type="EMBL" id="U46933">
    <property type="protein sequence ID" value="AAC54916.1"/>
    <property type="molecule type" value="Genomic_DNA"/>
</dbReference>
<dbReference type="PIR" id="S54125">
    <property type="entry name" value="S54125"/>
</dbReference>
<dbReference type="RefSeq" id="NP_043890.1">
    <property type="nucleotide sequence ID" value="NC_001720.1"/>
</dbReference>
<dbReference type="GeneID" id="1476563"/>
<dbReference type="Proteomes" id="UP000001594">
    <property type="component" value="Segment"/>
</dbReference>
<dbReference type="GO" id="GO:0042025">
    <property type="term" value="C:host cell nucleus"/>
    <property type="evidence" value="ECO:0007669"/>
    <property type="project" value="UniProtKB-SubCell"/>
</dbReference>
<dbReference type="GO" id="GO:0019028">
    <property type="term" value="C:viral capsid"/>
    <property type="evidence" value="ECO:0007669"/>
    <property type="project" value="UniProtKB-UniRule"/>
</dbReference>
<dbReference type="GO" id="GO:0031423">
    <property type="term" value="F:hexon binding"/>
    <property type="evidence" value="ECO:0007669"/>
    <property type="project" value="InterPro"/>
</dbReference>
<dbReference type="HAMAP" id="MF_04049">
    <property type="entry name" value="ADV_CAP8"/>
    <property type="match status" value="1"/>
</dbReference>
<dbReference type="InterPro" id="IPR000646">
    <property type="entry name" value="Adeno_PVIII"/>
</dbReference>
<dbReference type="Pfam" id="PF01310">
    <property type="entry name" value="Adeno_PVIII"/>
    <property type="match status" value="1"/>
</dbReference>
<organismHost>
    <name type="scientific">Galliformes</name>
    <dbReference type="NCBI Taxonomy" id="8976"/>
</organismHost>
<accession>Q89814</accession>
<sequence length="245" mass="26877">MNLMNATPTEYVWKYNPVSGIPAGAQQNYGATIDWVLPGGTGFAIATNDIRRQTLNPAVTRAITARFEAESDQQPYASPHETNVIAANVLDSGYPKSGLYPLELSGNQRVQLAGGLMVGRTEGRMQLAGGLTEGRVQLSGGFHGRPLVRGRSRRPPRWCGAELTGNGLPEQAEVTSDTYKYFLRTQGPSQVVEEPGVFSQRQFMTTFLPSVVPHPFDSTNPGDFPAQYSAIYKGRTAFEDTFWDW</sequence>
<organism>
    <name type="scientific">Fowl adenovirus A serotype 1 (strain CELO / Phelps)</name>
    <name type="common">FAdV-1</name>
    <name type="synonym">Avian adenovirus gal1 (strain Phelps)</name>
    <dbReference type="NCBI Taxonomy" id="10553"/>
    <lineage>
        <taxon>Viruses</taxon>
        <taxon>Varidnaviria</taxon>
        <taxon>Bamfordvirae</taxon>
        <taxon>Preplasmiviricota</taxon>
        <taxon>Tectiliviricetes</taxon>
        <taxon>Rowavirales</taxon>
        <taxon>Adenoviridae</taxon>
        <taxon>Aviadenovirus</taxon>
        <taxon>Fowl aviadenovirus A</taxon>
    </lineage>
</organism>
<comment type="function">
    <molecule>Hexon-linking protein-N</molecule>
    <text evidence="1">Structural component of the virion that acts as a cement protein on the capsid interior and which glue the peripentonal hexons and group-of-nine hexons together.</text>
</comment>
<comment type="function">
    <molecule>Hexon-linking protein-C</molecule>
    <text evidence="1">Structural component of the virion that acts as a cement protein on the capsid interior and which glue the peripentonal hexons and group-of-nine hexons together.</text>
</comment>
<comment type="subunit">
    <text evidence="1">Interacts with the peripentonal hexons as well as the hexons in the facets. Part of a complex composed of the core-capsid bridging protein, the endosome lysis protein VI and the hexon-linking protein VIII; these interactions bridge the virus core to the capsid.</text>
</comment>
<comment type="subcellular location">
    <molecule>Hexon-linking protein-C</molecule>
    <subcellularLocation>
        <location evidence="1">Virion</location>
    </subcellularLocation>
    <text evidence="1">Located on the inner side of the capsid shell. Present in 120 copies per virion.</text>
</comment>
<comment type="subcellular location">
    <molecule>Pre-hexon-linking protein VIII</molecule>
    <subcellularLocation>
        <location evidence="1">Host nucleus</location>
    </subcellularLocation>
</comment>
<comment type="subcellular location">
    <molecule>Hexon-linking protein-N</molecule>
    <subcellularLocation>
        <location evidence="1">Virion</location>
    </subcellularLocation>
    <text evidence="1">Located on the inner side of the capsid shell. Present in 120 copies per virion.</text>
</comment>
<comment type="induction">
    <text evidence="1">Expressed in the late phase of the viral replicative cycle.</text>
</comment>
<comment type="PTM">
    <text evidence="1">Cleaved by the viral protease during virion maturation. May cause the middle segment to be shed from the capsid.</text>
</comment>
<comment type="miscellaneous">
    <text evidence="1">All late proteins expressed from the major late promoter are produced by alternative splicing and alternative polyadenylation of the same gene giving rise to non-overlapping ORFs. A leader sequence is present in the N-terminus of all these mRNAs and is recognized by the viral shutoff protein to provide expression although conventional translation via ribosome scanning from the cap has been shut off in the host cell.</text>
</comment>
<comment type="similarity">
    <text evidence="1 2">Belongs to the adenoviridae hexon-linking protein family.</text>
</comment>
<reference key="1">
    <citation type="journal article" date="1995" name="J. Mol. Biol.">
        <title>The avian adenovirus penton: two fibres and one base.</title>
        <authorList>
            <person name="Hess M."/>
            <person name="Cuzange A."/>
            <person name="Ruigrok R.W."/>
            <person name="Chroboczek J."/>
            <person name="Jacrot B."/>
        </authorList>
    </citation>
    <scope>NUCLEOTIDE SEQUENCE [GENOMIC DNA]</scope>
</reference>
<reference key="2">
    <citation type="journal article" date="1996" name="J. Virol.">
        <title>The complete DNA sequence and genomic organization of the avian adenovirus CELO.</title>
        <authorList>
            <person name="Chiocca S."/>
            <person name="Kurzbauer R."/>
            <person name="Schaffner G."/>
            <person name="Baker A."/>
            <person name="Mautner V."/>
            <person name="Cotten M."/>
        </authorList>
    </citation>
    <scope>NUCLEOTIDE SEQUENCE [LARGE SCALE GENOMIC DNA]</scope>
</reference>